<feature type="chain" id="PRO_0000126083" description="Large ribosomal subunit protein eL27">
    <location>
        <begin position="1"/>
        <end position="136"/>
    </location>
</feature>
<feature type="domain" description="KOW">
    <location>
        <begin position="5"/>
        <end position="40"/>
    </location>
</feature>
<dbReference type="EMBL" id="AF401581">
    <property type="protein sequence ID" value="AAK95153.1"/>
    <property type="molecule type" value="mRNA"/>
</dbReference>
<dbReference type="RefSeq" id="NP_001187051.1">
    <property type="nucleotide sequence ID" value="NM_001200122.1"/>
</dbReference>
<dbReference type="SMR" id="Q90YU1"/>
<dbReference type="STRING" id="7998.ENSIPUP00000014778"/>
<dbReference type="Ensembl" id="ENSIPUT00015007230">
    <property type="protein sequence ID" value="ENSIPUP00015005765"/>
    <property type="gene ID" value="ENSIPUG00015003443"/>
</dbReference>
<dbReference type="GeneID" id="100304540"/>
<dbReference type="KEGG" id="ipu:100304540"/>
<dbReference type="CTD" id="6155"/>
<dbReference type="OMA" id="NQWFFTK"/>
<dbReference type="OrthoDB" id="2365484at2759"/>
<dbReference type="Proteomes" id="UP000221080">
    <property type="component" value="Chromosome 2"/>
</dbReference>
<dbReference type="GO" id="GO:0098556">
    <property type="term" value="C:cytoplasmic side of rough endoplasmic reticulum membrane"/>
    <property type="evidence" value="ECO:0000250"/>
    <property type="project" value="UniProtKB"/>
</dbReference>
<dbReference type="GO" id="GO:0005829">
    <property type="term" value="C:cytosol"/>
    <property type="evidence" value="ECO:0007669"/>
    <property type="project" value="UniProtKB-SubCell"/>
</dbReference>
<dbReference type="GO" id="GO:0015934">
    <property type="term" value="C:large ribosomal subunit"/>
    <property type="evidence" value="ECO:0000250"/>
    <property type="project" value="UniProtKB"/>
</dbReference>
<dbReference type="GO" id="GO:0003735">
    <property type="term" value="F:structural constituent of ribosome"/>
    <property type="evidence" value="ECO:0007669"/>
    <property type="project" value="InterPro"/>
</dbReference>
<dbReference type="GO" id="GO:0030218">
    <property type="term" value="P:erythrocyte differentiation"/>
    <property type="evidence" value="ECO:0007669"/>
    <property type="project" value="Ensembl"/>
</dbReference>
<dbReference type="GO" id="GO:0006412">
    <property type="term" value="P:translation"/>
    <property type="evidence" value="ECO:0007669"/>
    <property type="project" value="InterPro"/>
</dbReference>
<dbReference type="CDD" id="cd06090">
    <property type="entry name" value="KOW_RPL27"/>
    <property type="match status" value="1"/>
</dbReference>
<dbReference type="FunFam" id="2.30.30.770:FF:000001">
    <property type="entry name" value="60S ribosomal protein L27"/>
    <property type="match status" value="1"/>
</dbReference>
<dbReference type="Gene3D" id="2.30.30.770">
    <property type="match status" value="1"/>
</dbReference>
<dbReference type="InterPro" id="IPR005824">
    <property type="entry name" value="KOW"/>
</dbReference>
<dbReference type="InterPro" id="IPR001141">
    <property type="entry name" value="Ribosomal_eL27"/>
</dbReference>
<dbReference type="InterPro" id="IPR018262">
    <property type="entry name" value="Ribosomal_eL27_CS"/>
</dbReference>
<dbReference type="InterPro" id="IPR041991">
    <property type="entry name" value="Ribosomal_eL27_KOW"/>
</dbReference>
<dbReference type="InterPro" id="IPR038655">
    <property type="entry name" value="Ribosomal_eL27_sf"/>
</dbReference>
<dbReference type="InterPro" id="IPR008991">
    <property type="entry name" value="Translation_prot_SH3-like_sf"/>
</dbReference>
<dbReference type="PANTHER" id="PTHR10497">
    <property type="entry name" value="60S RIBOSOMAL PROTEIN L27"/>
    <property type="match status" value="1"/>
</dbReference>
<dbReference type="Pfam" id="PF00467">
    <property type="entry name" value="KOW"/>
    <property type="match status" value="1"/>
</dbReference>
<dbReference type="Pfam" id="PF01777">
    <property type="entry name" value="Ribosomal_L27e"/>
    <property type="match status" value="1"/>
</dbReference>
<dbReference type="SMART" id="SM00739">
    <property type="entry name" value="KOW"/>
    <property type="match status" value="1"/>
</dbReference>
<dbReference type="SUPFAM" id="SSF50104">
    <property type="entry name" value="Translation proteins SH3-like domain"/>
    <property type="match status" value="1"/>
</dbReference>
<dbReference type="PROSITE" id="PS01107">
    <property type="entry name" value="RIBOSOMAL_L27E"/>
    <property type="match status" value="1"/>
</dbReference>
<comment type="function">
    <text evidence="2">Component of the large ribosomal subunit.</text>
</comment>
<comment type="subunit">
    <text evidence="2">Component of the large ribosomal subunit.</text>
</comment>
<comment type="subcellular location">
    <subcellularLocation>
        <location evidence="2">Cytoplasm</location>
        <location evidence="2">Cytosol</location>
    </subcellularLocation>
    <subcellularLocation>
        <location evidence="2">Cytoplasm</location>
    </subcellularLocation>
    <subcellularLocation>
        <location evidence="1">Rough endoplasmic reticulum</location>
    </subcellularLocation>
    <text evidence="1 2">Detected on cytosolic polysomes (By similarity). Detected in ribosomes that are associated with the rough endoplasmic reticulum (By similarity).</text>
</comment>
<comment type="similarity">
    <text evidence="3">Belongs to the eukaryotic ribosomal protein eL27 family.</text>
</comment>
<protein>
    <recommendedName>
        <fullName evidence="3">Large ribosomal subunit protein eL27</fullName>
    </recommendedName>
    <alternativeName>
        <fullName>60S ribosomal protein L27</fullName>
    </alternativeName>
</protein>
<organism>
    <name type="scientific">Ictalurus punctatus</name>
    <name type="common">Channel catfish</name>
    <name type="synonym">Silurus punctatus</name>
    <dbReference type="NCBI Taxonomy" id="7998"/>
    <lineage>
        <taxon>Eukaryota</taxon>
        <taxon>Metazoa</taxon>
        <taxon>Chordata</taxon>
        <taxon>Craniata</taxon>
        <taxon>Vertebrata</taxon>
        <taxon>Euteleostomi</taxon>
        <taxon>Actinopterygii</taxon>
        <taxon>Neopterygii</taxon>
        <taxon>Teleostei</taxon>
        <taxon>Ostariophysi</taxon>
        <taxon>Siluriformes</taxon>
        <taxon>Ictaluridae</taxon>
        <taxon>Ictalurus</taxon>
    </lineage>
</organism>
<accession>Q90YU1</accession>
<name>RL27_ICTPU</name>
<sequence>MGKFMKPGKVVMVLAGRYAGRKAVIVKNIDDGTADRPYSHALVSGIDRYPRKVTATMGKKKVAKRSKIKAFVKVFNYNHLMPTRYSVDIPLDKTIVNKDVFRDPALKRKARREAKVKFEERYKTGKNKWFFQKLRF</sequence>
<keyword id="KW-0963">Cytoplasm</keyword>
<keyword id="KW-0256">Endoplasmic reticulum</keyword>
<keyword id="KW-0687">Ribonucleoprotein</keyword>
<keyword id="KW-0689">Ribosomal protein</keyword>
<reference key="1">
    <citation type="journal article" date="2003" name="Gene">
        <title>Translational machinery of channel catfish: II. Complementary DNA and expression of the complete set of 47 60S ribosomal proteins.</title>
        <authorList>
            <person name="Patterson A.P."/>
            <person name="Karsi A."/>
            <person name="Feng J."/>
            <person name="Liu Z.J."/>
        </authorList>
    </citation>
    <scope>NUCLEOTIDE SEQUENCE [MRNA]</scope>
</reference>
<evidence type="ECO:0000250" key="1">
    <source>
        <dbReference type="UniProtKB" id="A1XQU5"/>
    </source>
</evidence>
<evidence type="ECO:0000250" key="2">
    <source>
        <dbReference type="UniProtKB" id="P61353"/>
    </source>
</evidence>
<evidence type="ECO:0000305" key="3"/>
<proteinExistence type="evidence at transcript level"/>
<gene>
    <name type="primary">rpl27</name>
</gene>